<feature type="chain" id="PRO_1000048491" description="DNA polymerase III PolC-type">
    <location>
        <begin position="1"/>
        <end position="1462"/>
    </location>
</feature>
<feature type="domain" description="Exonuclease">
    <location>
        <begin position="424"/>
        <end position="580"/>
    </location>
</feature>
<dbReference type="EC" id="2.7.7.7" evidence="1"/>
<dbReference type="EMBL" id="CP000387">
    <property type="protein sequence ID" value="ABN45437.1"/>
    <property type="molecule type" value="Genomic_DNA"/>
</dbReference>
<dbReference type="RefSeq" id="WP_011837528.1">
    <property type="nucleotide sequence ID" value="NC_009009.1"/>
</dbReference>
<dbReference type="RefSeq" id="YP_001035987.1">
    <property type="nucleotide sequence ID" value="NC_009009.1"/>
</dbReference>
<dbReference type="SMR" id="A3CQI2"/>
<dbReference type="STRING" id="388919.SSA_2066"/>
<dbReference type="KEGG" id="ssa:SSA_2066"/>
<dbReference type="PATRIC" id="fig|388919.9.peg.1959"/>
<dbReference type="eggNOG" id="COG2176">
    <property type="taxonomic scope" value="Bacteria"/>
</dbReference>
<dbReference type="HOGENOM" id="CLU_003297_2_0_9"/>
<dbReference type="OrthoDB" id="9804290at2"/>
<dbReference type="Proteomes" id="UP000002148">
    <property type="component" value="Chromosome"/>
</dbReference>
<dbReference type="GO" id="GO:0005737">
    <property type="term" value="C:cytoplasm"/>
    <property type="evidence" value="ECO:0007669"/>
    <property type="project" value="UniProtKB-SubCell"/>
</dbReference>
<dbReference type="GO" id="GO:0008408">
    <property type="term" value="F:3'-5' exonuclease activity"/>
    <property type="evidence" value="ECO:0007669"/>
    <property type="project" value="UniProtKB-UniRule"/>
</dbReference>
<dbReference type="GO" id="GO:0003677">
    <property type="term" value="F:DNA binding"/>
    <property type="evidence" value="ECO:0007669"/>
    <property type="project" value="UniProtKB-UniRule"/>
</dbReference>
<dbReference type="GO" id="GO:0003887">
    <property type="term" value="F:DNA-directed DNA polymerase activity"/>
    <property type="evidence" value="ECO:0007669"/>
    <property type="project" value="UniProtKB-UniRule"/>
</dbReference>
<dbReference type="GO" id="GO:0006261">
    <property type="term" value="P:DNA-templated DNA replication"/>
    <property type="evidence" value="ECO:0007669"/>
    <property type="project" value="UniProtKB-UniRule"/>
</dbReference>
<dbReference type="CDD" id="cd06127">
    <property type="entry name" value="DEDDh"/>
    <property type="match status" value="1"/>
</dbReference>
<dbReference type="CDD" id="cd07435">
    <property type="entry name" value="PHP_PolIIIA_POLC"/>
    <property type="match status" value="1"/>
</dbReference>
<dbReference type="CDD" id="cd04484">
    <property type="entry name" value="polC_OBF"/>
    <property type="match status" value="1"/>
</dbReference>
<dbReference type="FunFam" id="3.30.420.10:FF:000045">
    <property type="entry name" value="3'-5' exonuclease DinG"/>
    <property type="match status" value="1"/>
</dbReference>
<dbReference type="Gene3D" id="1.10.150.870">
    <property type="match status" value="1"/>
</dbReference>
<dbReference type="Gene3D" id="3.30.1900.20">
    <property type="match status" value="1"/>
</dbReference>
<dbReference type="Gene3D" id="6.10.140.1510">
    <property type="match status" value="1"/>
</dbReference>
<dbReference type="Gene3D" id="3.20.20.140">
    <property type="entry name" value="Metal-dependent hydrolases"/>
    <property type="match status" value="1"/>
</dbReference>
<dbReference type="Gene3D" id="2.40.50.140">
    <property type="entry name" value="Nucleic acid-binding proteins"/>
    <property type="match status" value="1"/>
</dbReference>
<dbReference type="Gene3D" id="1.10.150.700">
    <property type="entry name" value="PolC, middle finger domain"/>
    <property type="match status" value="1"/>
</dbReference>
<dbReference type="Gene3D" id="3.30.420.10">
    <property type="entry name" value="Ribonuclease H-like superfamily/Ribonuclease H"/>
    <property type="match status" value="1"/>
</dbReference>
<dbReference type="HAMAP" id="MF_00356">
    <property type="entry name" value="DNApol_PolC"/>
    <property type="match status" value="1"/>
</dbReference>
<dbReference type="InterPro" id="IPR011708">
    <property type="entry name" value="DNA_pol3_alpha_NTPase_dom"/>
</dbReference>
<dbReference type="InterPro" id="IPR040982">
    <property type="entry name" value="DNA_pol3_finger"/>
</dbReference>
<dbReference type="InterPro" id="IPR024754">
    <property type="entry name" value="DNA_PolC-like_N_II"/>
</dbReference>
<dbReference type="InterPro" id="IPR028112">
    <property type="entry name" value="DNA_PolC-type_N_I"/>
</dbReference>
<dbReference type="InterPro" id="IPR004805">
    <property type="entry name" value="DnaE2/DnaE/PolC"/>
</dbReference>
<dbReference type="InterPro" id="IPR029460">
    <property type="entry name" value="DNAPol_HHH"/>
</dbReference>
<dbReference type="InterPro" id="IPR006054">
    <property type="entry name" value="DnaQ"/>
</dbReference>
<dbReference type="InterPro" id="IPR013520">
    <property type="entry name" value="Exonuclease_RNaseT/DNA_pol3"/>
</dbReference>
<dbReference type="InterPro" id="IPR012340">
    <property type="entry name" value="NA-bd_OB-fold"/>
</dbReference>
<dbReference type="InterPro" id="IPR004365">
    <property type="entry name" value="NA-bd_OB_tRNA"/>
</dbReference>
<dbReference type="InterPro" id="IPR004013">
    <property type="entry name" value="PHP_dom"/>
</dbReference>
<dbReference type="InterPro" id="IPR003141">
    <property type="entry name" value="Pol/His_phosphatase_N"/>
</dbReference>
<dbReference type="InterPro" id="IPR016195">
    <property type="entry name" value="Pol/histidinol_Pase-like"/>
</dbReference>
<dbReference type="InterPro" id="IPR006308">
    <property type="entry name" value="Pol_III_a_PolC-type_gram_pos"/>
</dbReference>
<dbReference type="InterPro" id="IPR044923">
    <property type="entry name" value="PolC_middle_finger_sf"/>
</dbReference>
<dbReference type="InterPro" id="IPR012337">
    <property type="entry name" value="RNaseH-like_sf"/>
</dbReference>
<dbReference type="InterPro" id="IPR036397">
    <property type="entry name" value="RNaseH_sf"/>
</dbReference>
<dbReference type="NCBIfam" id="TIGR00573">
    <property type="entry name" value="dnaq"/>
    <property type="match status" value="1"/>
</dbReference>
<dbReference type="NCBIfam" id="TIGR01405">
    <property type="entry name" value="polC_Gram_pos"/>
    <property type="match status" value="1"/>
</dbReference>
<dbReference type="NCBIfam" id="NF001688">
    <property type="entry name" value="PRK00448.1"/>
    <property type="match status" value="1"/>
</dbReference>
<dbReference type="PANTHER" id="PTHR32294:SF5">
    <property type="entry name" value="DNA POLYMERASE III POLC-TYPE"/>
    <property type="match status" value="1"/>
</dbReference>
<dbReference type="PANTHER" id="PTHR32294">
    <property type="entry name" value="DNA POLYMERASE III SUBUNIT ALPHA"/>
    <property type="match status" value="1"/>
</dbReference>
<dbReference type="Pfam" id="PF14480">
    <property type="entry name" value="DNA_pol3_a_NI"/>
    <property type="match status" value="1"/>
</dbReference>
<dbReference type="Pfam" id="PF11490">
    <property type="entry name" value="DNA_pol3_a_NII"/>
    <property type="match status" value="1"/>
</dbReference>
<dbReference type="Pfam" id="PF07733">
    <property type="entry name" value="DNA_pol3_alpha"/>
    <property type="match status" value="2"/>
</dbReference>
<dbReference type="Pfam" id="PF17657">
    <property type="entry name" value="DNA_pol3_finger"/>
    <property type="match status" value="1"/>
</dbReference>
<dbReference type="Pfam" id="PF14579">
    <property type="entry name" value="HHH_6"/>
    <property type="match status" value="1"/>
</dbReference>
<dbReference type="Pfam" id="PF02811">
    <property type="entry name" value="PHP"/>
    <property type="match status" value="1"/>
</dbReference>
<dbReference type="Pfam" id="PF00929">
    <property type="entry name" value="RNase_T"/>
    <property type="match status" value="1"/>
</dbReference>
<dbReference type="Pfam" id="PF01336">
    <property type="entry name" value="tRNA_anti-codon"/>
    <property type="match status" value="1"/>
</dbReference>
<dbReference type="SMART" id="SM00479">
    <property type="entry name" value="EXOIII"/>
    <property type="match status" value="1"/>
</dbReference>
<dbReference type="SMART" id="SM00481">
    <property type="entry name" value="POLIIIAc"/>
    <property type="match status" value="1"/>
</dbReference>
<dbReference type="SUPFAM" id="SSF50249">
    <property type="entry name" value="Nucleic acid-binding proteins"/>
    <property type="match status" value="1"/>
</dbReference>
<dbReference type="SUPFAM" id="SSF89550">
    <property type="entry name" value="PHP domain-like"/>
    <property type="match status" value="1"/>
</dbReference>
<dbReference type="SUPFAM" id="SSF53098">
    <property type="entry name" value="Ribonuclease H-like"/>
    <property type="match status" value="1"/>
</dbReference>
<sequence>MSNKFEILMNQLDMPLEMRNSEAFLNAEIEKVLVHKVSRVWEFHFSFANILPIEIFRELQKRLAQEFSKTGNQAVFEIHCQAPQVSDELLQAYYQLAFEEGPCASHGFKSLYQDLRVHLDGDKLLIEGASTIDTEHFRKNHLPNLSQQLVKYGFPQLTCLVQHSDELTQQQAENFQAENDKIVQAANEEALKAMESLQQMAPPPEEKPAYDFQARKAAAKPKLDKAEITPMIEVQTEENRLVFEGMVFDLEQKVTRTGRVLLNFKMTDYTSSFSLQKWMKNEEEAKKFDMIKKGAWLRVRGNVEMNNFTRDLTMNVQDVQAVTHYERKDLMPEGQKRVEFHAHTNMSTMDALPEVEEIVATAAKWGHKAVAITDHGNVQSFPHGYKAAKKAGIQLIYGMEANIVEDRVPIVYNEVDMELSDATYVVFDVETTGLSAVYNDLIQVAASKMHKGNIIAEFDEFINPGHPLSAFTTDLTGITDEHVRNAKPLEQVLKEFQEFCQDSVLVAHNATFDVGFMNVNYERHGLPKIIQPVIDTLEFARNLYPEYKRHGLGPLTKRFQIALEHHHMANYDAEATGRLLFIFIKDVAEKHGVTNLKDLNTDLVDENSYKKARVKHATIYVKNQTGLKNIFKLVSLSNTKYFEGVPRIPRTVLDAHREGLILGSACSEGEVYDAVVSQGVDAAVEVAKYYDFIEVMPPAIYEPLIAKEQIKDQEELQTIIRNLIEVGDRLGKPVLATGNVHYIEPEEEIYREIIVRSLGQGAMINRTIGHGENAQPAPLPKAHFRTTNEMLDEFAFLGEDLAKKLVITNPNQLAETFEPVEVVKGDLYTPFIDKAEETVAELTYQKAFEIYGNPLPDIVDLRIEKELTSILGNGFAVIYLASQMLVQRSNERGYLVGSRGSVGSSFVATMIGITEVNPLSPHYVCGKCQYSEFITDGSYGSGFDMPDKDCPECGHKLSKNGQDIPFETFLGFDGDKVPDIDLNFSGEDQPSAHLDVRDIFGSEYAFRAGTVGTVAAKTAYGFVKGYERDYGKFYRDAEVERLAQGAAGVKRTTGQHPGGIVVIPNYMDVYDFTPVQYPADDVTAEWQTTHFNFHDIDENVLKLDVLGHDDPTMIRKLQDLSGIDPNDIPMDDAGVMALFSGTDILGVTQEQIGTPTGMLGIPEFGTNFVRGMVDETHPTTFAELLQLSGLSHGTDVWLGNAQDLIKQGIADLSTVIGCRDDIMVYLMHKGLDPKMAFTIMERVRKGLWLKISEEERNGYIAAMKENNVPEWYIESCGKIKYMFPKAHAAAYVMMALRVAYFKVHHPIYYYCAYFSIRAKAFDIKTMSGGLDAVKRRMSEIAEKRKNNEASNVEIDLYTTLEIVNEMLERGFKFGKLDLYKSHATEFLIEGDTLIPPFSAMDGLGDNVARQVVRAREEGEFLSKTELRKRGGLSSTLVEKMDDMGILGNMPEDNQLSLFDEFF</sequence>
<organism>
    <name type="scientific">Streptococcus sanguinis (strain SK36)</name>
    <dbReference type="NCBI Taxonomy" id="388919"/>
    <lineage>
        <taxon>Bacteria</taxon>
        <taxon>Bacillati</taxon>
        <taxon>Bacillota</taxon>
        <taxon>Bacilli</taxon>
        <taxon>Lactobacillales</taxon>
        <taxon>Streptococcaceae</taxon>
        <taxon>Streptococcus</taxon>
    </lineage>
</organism>
<evidence type="ECO:0000255" key="1">
    <source>
        <dbReference type="HAMAP-Rule" id="MF_00356"/>
    </source>
</evidence>
<reference key="1">
    <citation type="journal article" date="2007" name="J. Bacteriol.">
        <title>Genome of the opportunistic pathogen Streptococcus sanguinis.</title>
        <authorList>
            <person name="Xu P."/>
            <person name="Alves J.M."/>
            <person name="Kitten T."/>
            <person name="Brown A."/>
            <person name="Chen Z."/>
            <person name="Ozaki L.S."/>
            <person name="Manque P."/>
            <person name="Ge X."/>
            <person name="Serrano M.G."/>
            <person name="Puiu D."/>
            <person name="Hendricks S."/>
            <person name="Wang Y."/>
            <person name="Chaplin M.D."/>
            <person name="Akan D."/>
            <person name="Paik S."/>
            <person name="Peterson D.L."/>
            <person name="Macrina F.L."/>
            <person name="Buck G.A."/>
        </authorList>
    </citation>
    <scope>NUCLEOTIDE SEQUENCE [LARGE SCALE GENOMIC DNA]</scope>
    <source>
        <strain>SK36</strain>
    </source>
</reference>
<keyword id="KW-0963">Cytoplasm</keyword>
<keyword id="KW-0235">DNA replication</keyword>
<keyword id="KW-0239">DNA-directed DNA polymerase</keyword>
<keyword id="KW-0269">Exonuclease</keyword>
<keyword id="KW-0378">Hydrolase</keyword>
<keyword id="KW-0540">Nuclease</keyword>
<keyword id="KW-0548">Nucleotidyltransferase</keyword>
<keyword id="KW-1185">Reference proteome</keyword>
<keyword id="KW-0808">Transferase</keyword>
<proteinExistence type="inferred from homology"/>
<protein>
    <recommendedName>
        <fullName evidence="1">DNA polymerase III PolC-type</fullName>
        <shortName evidence="1">PolIII</shortName>
        <ecNumber evidence="1">2.7.7.7</ecNumber>
    </recommendedName>
</protein>
<accession>A3CQI2</accession>
<gene>
    <name evidence="1" type="primary">polC</name>
    <name type="ordered locus">SSA_2066</name>
</gene>
<name>DPO3_STRSV</name>
<comment type="function">
    <text evidence="1">Required for replicative DNA synthesis. This DNA polymerase also exhibits 3' to 5' exonuclease activity.</text>
</comment>
<comment type="catalytic activity">
    <reaction evidence="1">
        <text>DNA(n) + a 2'-deoxyribonucleoside 5'-triphosphate = DNA(n+1) + diphosphate</text>
        <dbReference type="Rhea" id="RHEA:22508"/>
        <dbReference type="Rhea" id="RHEA-COMP:17339"/>
        <dbReference type="Rhea" id="RHEA-COMP:17340"/>
        <dbReference type="ChEBI" id="CHEBI:33019"/>
        <dbReference type="ChEBI" id="CHEBI:61560"/>
        <dbReference type="ChEBI" id="CHEBI:173112"/>
        <dbReference type="EC" id="2.7.7.7"/>
    </reaction>
</comment>
<comment type="subcellular location">
    <subcellularLocation>
        <location evidence="1">Cytoplasm</location>
    </subcellularLocation>
</comment>
<comment type="similarity">
    <text evidence="1">Belongs to the DNA polymerase type-C family. PolC subfamily.</text>
</comment>